<name>ARND_YERP3</name>
<accession>A7FHH5</accession>
<reference key="1">
    <citation type="journal article" date="2007" name="PLoS Genet.">
        <title>The complete genome sequence of Yersinia pseudotuberculosis IP31758, the causative agent of Far East scarlet-like fever.</title>
        <authorList>
            <person name="Eppinger M."/>
            <person name="Rosovitz M.J."/>
            <person name="Fricke W.F."/>
            <person name="Rasko D.A."/>
            <person name="Kokorina G."/>
            <person name="Fayolle C."/>
            <person name="Lindler L.E."/>
            <person name="Carniel E."/>
            <person name="Ravel J."/>
        </authorList>
    </citation>
    <scope>NUCLEOTIDE SEQUENCE [LARGE SCALE GENOMIC DNA]</scope>
    <source>
        <strain>IP 31758</strain>
    </source>
</reference>
<gene>
    <name evidence="1" type="primary">arnD</name>
    <name type="ordered locus">YpsIP31758_1728</name>
</gene>
<organism>
    <name type="scientific">Yersinia pseudotuberculosis serotype O:1b (strain IP 31758)</name>
    <dbReference type="NCBI Taxonomy" id="349747"/>
    <lineage>
        <taxon>Bacteria</taxon>
        <taxon>Pseudomonadati</taxon>
        <taxon>Pseudomonadota</taxon>
        <taxon>Gammaproteobacteria</taxon>
        <taxon>Enterobacterales</taxon>
        <taxon>Yersiniaceae</taxon>
        <taxon>Yersinia</taxon>
    </lineage>
</organism>
<keyword id="KW-0046">Antibiotic resistance</keyword>
<keyword id="KW-0378">Hydrolase</keyword>
<keyword id="KW-0441">Lipid A biosynthesis</keyword>
<keyword id="KW-0444">Lipid biosynthesis</keyword>
<keyword id="KW-0443">Lipid metabolism</keyword>
<keyword id="KW-0448">Lipopolysaccharide biosynthesis</keyword>
<sequence length="301" mass="33504">MKQVGLRIDVDTYRGTQYGVPSLLTVLEKHDIRASFFFSVGPDNMGRHLWRLFRPRFLWKMLRSNAASLYGWDILLAGTAWPGKKIAKDFGPLMKAAAMAGHEVGLHAWDHQGWQANVASWSQQQLTEQVQRGVDTLQQSIGQPISCSAAAGWRADERVLAVKQQFDFSYNSDCRGTHPFRPLLPNGSLGSVQIPVTLPTYDEVVGGEVQAENFNDFIIDAILRDSGVSVYTIHAEVEGMSQAAMFEQLLMRAKQQDIEFCPLSKLLPSDLQLLPVGKVIRAAFPGREGWLGCQSDIKDAE</sequence>
<proteinExistence type="inferred from homology"/>
<evidence type="ECO:0000255" key="1">
    <source>
        <dbReference type="HAMAP-Rule" id="MF_01870"/>
    </source>
</evidence>
<feature type="chain" id="PRO_0000383558" description="Probable 4-deoxy-4-formamido-L-arabinose-phosphoundecaprenol deformylase ArnD">
    <location>
        <begin position="1"/>
        <end position="301"/>
    </location>
</feature>
<feature type="domain" description="NodB homology" evidence="1">
    <location>
        <begin position="2"/>
        <end position="261"/>
    </location>
</feature>
<comment type="function">
    <text evidence="1">Catalyzes the deformylation of 4-deoxy-4-formamido-L-arabinose-phosphoundecaprenol to 4-amino-4-deoxy-L-arabinose-phosphoundecaprenol. The modified arabinose is attached to lipid A and is required for resistance to polymyxin and cationic antimicrobial peptides.</text>
</comment>
<comment type="catalytic activity">
    <reaction evidence="1">
        <text>4-deoxy-4-formamido-alpha-L-arabinopyranosyl di-trans,octa-cis-undecaprenyl phosphate + H2O = 4-amino-4-deoxy-alpha-L-arabinopyranosyl di-trans,octa-cis-undecaprenyl phosphate + formate</text>
        <dbReference type="Rhea" id="RHEA:27734"/>
        <dbReference type="ChEBI" id="CHEBI:15377"/>
        <dbReference type="ChEBI" id="CHEBI:15740"/>
        <dbReference type="ChEBI" id="CHEBI:58909"/>
        <dbReference type="ChEBI" id="CHEBI:60463"/>
        <dbReference type="EC" id="3.5.1.n3"/>
    </reaction>
</comment>
<comment type="pathway">
    <text evidence="1">Glycolipid biosynthesis; 4-amino-4-deoxy-alpha-L-arabinose undecaprenyl phosphate biosynthesis; 4-amino-4-deoxy-alpha-L-arabinose undecaprenyl phosphate from UDP-4-deoxy-4-formamido-beta-L-arabinose and undecaprenyl phosphate: step 2/2.</text>
</comment>
<comment type="pathway">
    <text evidence="1">Bacterial outer membrane biogenesis; lipopolysaccharide biosynthesis.</text>
</comment>
<comment type="similarity">
    <text evidence="1">Belongs to the polysaccharide deacetylase family. ArnD deformylase subfamily.</text>
</comment>
<protein>
    <recommendedName>
        <fullName evidence="1">Probable 4-deoxy-4-formamido-L-arabinose-phosphoundecaprenol deformylase ArnD</fullName>
        <ecNumber evidence="1">3.5.1.n3</ecNumber>
    </recommendedName>
</protein>
<dbReference type="EC" id="3.5.1.n3" evidence="1"/>
<dbReference type="EMBL" id="CP000720">
    <property type="protein sequence ID" value="ABS48440.1"/>
    <property type="molecule type" value="Genomic_DNA"/>
</dbReference>
<dbReference type="RefSeq" id="WP_002211822.1">
    <property type="nucleotide sequence ID" value="NC_009708.1"/>
</dbReference>
<dbReference type="SMR" id="A7FHH5"/>
<dbReference type="GeneID" id="57976258"/>
<dbReference type="KEGG" id="ypi:YpsIP31758_1728"/>
<dbReference type="HOGENOM" id="CLU_084199_0_0_6"/>
<dbReference type="UniPathway" id="UPA00030"/>
<dbReference type="UniPathway" id="UPA00036">
    <property type="reaction ID" value="UER00496"/>
</dbReference>
<dbReference type="Proteomes" id="UP000002412">
    <property type="component" value="Chromosome"/>
</dbReference>
<dbReference type="GO" id="GO:0016020">
    <property type="term" value="C:membrane"/>
    <property type="evidence" value="ECO:0007669"/>
    <property type="project" value="GOC"/>
</dbReference>
<dbReference type="GO" id="GO:0016811">
    <property type="term" value="F:hydrolase activity, acting on carbon-nitrogen (but not peptide) bonds, in linear amides"/>
    <property type="evidence" value="ECO:0007669"/>
    <property type="project" value="UniProtKB-UniRule"/>
</dbReference>
<dbReference type="GO" id="GO:0036108">
    <property type="term" value="P:4-amino-4-deoxy-alpha-L-arabinopyranosyl undecaprenyl phosphate biosynthetic process"/>
    <property type="evidence" value="ECO:0007669"/>
    <property type="project" value="UniProtKB-UniRule"/>
</dbReference>
<dbReference type="GO" id="GO:0009245">
    <property type="term" value="P:lipid A biosynthetic process"/>
    <property type="evidence" value="ECO:0007669"/>
    <property type="project" value="UniProtKB-UniRule"/>
</dbReference>
<dbReference type="GO" id="GO:0009103">
    <property type="term" value="P:lipopolysaccharide biosynthetic process"/>
    <property type="evidence" value="ECO:0007669"/>
    <property type="project" value="UniProtKB-UniRule"/>
</dbReference>
<dbReference type="GO" id="GO:0046677">
    <property type="term" value="P:response to antibiotic"/>
    <property type="evidence" value="ECO:0007669"/>
    <property type="project" value="UniProtKB-KW"/>
</dbReference>
<dbReference type="CDD" id="cd10939">
    <property type="entry name" value="CE4_ArnD"/>
    <property type="match status" value="1"/>
</dbReference>
<dbReference type="Gene3D" id="3.20.20.370">
    <property type="entry name" value="Glycoside hydrolase/deacetylase"/>
    <property type="match status" value="1"/>
</dbReference>
<dbReference type="HAMAP" id="MF_01870">
    <property type="entry name" value="ArnD"/>
    <property type="match status" value="1"/>
</dbReference>
<dbReference type="InterPro" id="IPR023557">
    <property type="entry name" value="ArnD"/>
</dbReference>
<dbReference type="InterPro" id="IPR011330">
    <property type="entry name" value="Glyco_hydro/deAcase_b/a-brl"/>
</dbReference>
<dbReference type="InterPro" id="IPR002509">
    <property type="entry name" value="NODB_dom"/>
</dbReference>
<dbReference type="InterPro" id="IPR050248">
    <property type="entry name" value="Polysacc_deacetylase_ArnD"/>
</dbReference>
<dbReference type="NCBIfam" id="NF011923">
    <property type="entry name" value="PRK15394.1"/>
    <property type="match status" value="1"/>
</dbReference>
<dbReference type="PANTHER" id="PTHR10587:SF137">
    <property type="entry name" value="4-DEOXY-4-FORMAMIDO-L-ARABINOSE-PHOSPHOUNDECAPRENOL DEFORMYLASE ARND-RELATED"/>
    <property type="match status" value="1"/>
</dbReference>
<dbReference type="PANTHER" id="PTHR10587">
    <property type="entry name" value="GLYCOSYL TRANSFERASE-RELATED"/>
    <property type="match status" value="1"/>
</dbReference>
<dbReference type="Pfam" id="PF01522">
    <property type="entry name" value="Polysacc_deac_1"/>
    <property type="match status" value="1"/>
</dbReference>
<dbReference type="SUPFAM" id="SSF88713">
    <property type="entry name" value="Glycoside hydrolase/deacetylase"/>
    <property type="match status" value="1"/>
</dbReference>
<dbReference type="PROSITE" id="PS51677">
    <property type="entry name" value="NODB"/>
    <property type="match status" value="1"/>
</dbReference>